<feature type="chain" id="PRO_0000296067" description="Small ribosomal subunit protein uS12cz/uS12cy">
    <location>
        <begin position="1"/>
        <end position="123"/>
    </location>
</feature>
<protein>
    <recommendedName>
        <fullName evidence="2">Small ribosomal subunit protein uS12cz/uS12cy</fullName>
    </recommendedName>
    <alternativeName>
        <fullName evidence="3">30S ribosomal protein S12, chloroplastic</fullName>
    </alternativeName>
</protein>
<reference key="1">
    <citation type="submission" date="2007-03" db="EMBL/GenBank/DDBJ databases">
        <title>Sequencing analysis of Draba nemoroza chloroplast DNA.</title>
        <authorList>
            <person name="Hosouchi T."/>
            <person name="Tsuruoka H."/>
            <person name="Kotani H."/>
        </authorList>
    </citation>
    <scope>NUCLEOTIDE SEQUENCE [LARGE SCALE GENOMIC DNA]</scope>
</reference>
<organism>
    <name type="scientific">Draba nemorosa</name>
    <name type="common">Woodland whitlowgrass</name>
    <dbReference type="NCBI Taxonomy" id="171822"/>
    <lineage>
        <taxon>Eukaryota</taxon>
        <taxon>Viridiplantae</taxon>
        <taxon>Streptophyta</taxon>
        <taxon>Embryophyta</taxon>
        <taxon>Tracheophyta</taxon>
        <taxon>Spermatophyta</taxon>
        <taxon>Magnoliopsida</taxon>
        <taxon>eudicotyledons</taxon>
        <taxon>Gunneridae</taxon>
        <taxon>Pentapetalae</taxon>
        <taxon>rosids</taxon>
        <taxon>malvids</taxon>
        <taxon>Brassicales</taxon>
        <taxon>Brassicaceae</taxon>
        <taxon>Arabideae</taxon>
        <taxon>Draba</taxon>
    </lineage>
</organism>
<proteinExistence type="inferred from homology"/>
<evidence type="ECO:0000250" key="1"/>
<evidence type="ECO:0000255" key="2">
    <source>
        <dbReference type="HAMAP-Rule" id="MF_00403"/>
    </source>
</evidence>
<evidence type="ECO:0000305" key="3"/>
<comment type="function">
    <text evidence="1">With S4 and S5 plays an important role in translational accuracy. Located at the interface of the 30S and 50S subunits (By similarity).</text>
</comment>
<comment type="subunit">
    <text evidence="1">Part of the 30S ribosomal subunit.</text>
</comment>
<comment type="subcellular location">
    <subcellularLocation>
        <location>Plastid</location>
        <location>Chloroplast</location>
    </subcellularLocation>
</comment>
<comment type="similarity">
    <text evidence="3">Belongs to the universal ribosomal protein uS12 family.</text>
</comment>
<geneLocation type="chloroplast"/>
<sequence>MPTIKQLIRNTRQPIRNVTKSPALRGCPQRRGTCTRVYTITPKKPNSALRKVARVRLTSGFEITAYIPGIGHNLQEHSVVLVRGGRVKDLPGVRYHIVRGTLDAVGVKDRQQGRSKYGVKKPK</sequence>
<gene>
    <name type="primary">rpl2-A</name>
</gene>
<gene>
    <name type="primary">rpl2-B</name>
</gene>
<name>RR12_DRANE</name>
<keyword id="KW-0150">Chloroplast</keyword>
<keyword id="KW-0934">Plastid</keyword>
<keyword id="KW-0687">Ribonucleoprotein</keyword>
<keyword id="KW-0689">Ribosomal protein</keyword>
<keyword id="KW-0694">RNA-binding</keyword>
<keyword id="KW-0699">rRNA-binding</keyword>
<dbReference type="EMBL" id="AP009373">
    <property type="protein sequence ID" value="BAF50398.1"/>
    <property type="molecule type" value="Genomic_DNA"/>
</dbReference>
<dbReference type="EMBL" id="AP009373">
    <property type="protein sequence ID" value="BAF50421.1"/>
    <property type="molecule type" value="Genomic_DNA"/>
</dbReference>
<dbReference type="SMR" id="A4QL43"/>
<dbReference type="GO" id="GO:0009507">
    <property type="term" value="C:chloroplast"/>
    <property type="evidence" value="ECO:0007669"/>
    <property type="project" value="UniProtKB-SubCell"/>
</dbReference>
<dbReference type="GO" id="GO:0015935">
    <property type="term" value="C:small ribosomal subunit"/>
    <property type="evidence" value="ECO:0007669"/>
    <property type="project" value="InterPro"/>
</dbReference>
<dbReference type="GO" id="GO:0019843">
    <property type="term" value="F:rRNA binding"/>
    <property type="evidence" value="ECO:0007669"/>
    <property type="project" value="UniProtKB-UniRule"/>
</dbReference>
<dbReference type="GO" id="GO:0003735">
    <property type="term" value="F:structural constituent of ribosome"/>
    <property type="evidence" value="ECO:0007669"/>
    <property type="project" value="InterPro"/>
</dbReference>
<dbReference type="GO" id="GO:0006412">
    <property type="term" value="P:translation"/>
    <property type="evidence" value="ECO:0007669"/>
    <property type="project" value="UniProtKB-UniRule"/>
</dbReference>
<dbReference type="CDD" id="cd03368">
    <property type="entry name" value="Ribosomal_S12"/>
    <property type="match status" value="1"/>
</dbReference>
<dbReference type="FunFam" id="2.40.50.140:FF:000008">
    <property type="entry name" value="30S ribosomal protein S12, chloroplastic"/>
    <property type="match status" value="1"/>
</dbReference>
<dbReference type="Gene3D" id="2.40.50.140">
    <property type="entry name" value="Nucleic acid-binding proteins"/>
    <property type="match status" value="1"/>
</dbReference>
<dbReference type="HAMAP" id="MF_00403_B">
    <property type="entry name" value="Ribosomal_uS12_B"/>
    <property type="match status" value="1"/>
</dbReference>
<dbReference type="InterPro" id="IPR012340">
    <property type="entry name" value="NA-bd_OB-fold"/>
</dbReference>
<dbReference type="InterPro" id="IPR006032">
    <property type="entry name" value="Ribosomal_uS12"/>
</dbReference>
<dbReference type="InterPro" id="IPR005679">
    <property type="entry name" value="Ribosomal_uS12_bac"/>
</dbReference>
<dbReference type="NCBIfam" id="TIGR00981">
    <property type="entry name" value="rpsL_bact"/>
    <property type="match status" value="1"/>
</dbReference>
<dbReference type="PANTHER" id="PTHR11652">
    <property type="entry name" value="30S RIBOSOMAL PROTEIN S12 FAMILY MEMBER"/>
    <property type="match status" value="1"/>
</dbReference>
<dbReference type="Pfam" id="PF00164">
    <property type="entry name" value="Ribosom_S12_S23"/>
    <property type="match status" value="1"/>
</dbReference>
<dbReference type="PIRSF" id="PIRSF002133">
    <property type="entry name" value="Ribosomal_S12/S23"/>
    <property type="match status" value="1"/>
</dbReference>
<dbReference type="PRINTS" id="PR01034">
    <property type="entry name" value="RIBOSOMALS12"/>
</dbReference>
<dbReference type="SUPFAM" id="SSF50249">
    <property type="entry name" value="Nucleic acid-binding proteins"/>
    <property type="match status" value="1"/>
</dbReference>
<dbReference type="PROSITE" id="PS00055">
    <property type="entry name" value="RIBOSOMAL_S12"/>
    <property type="match status" value="1"/>
</dbReference>
<accession>A4QL43</accession>